<gene>
    <name evidence="1" type="primary">argB</name>
    <name type="ordered locus">SEN3917</name>
</gene>
<protein>
    <recommendedName>
        <fullName evidence="1">Acetylglutamate kinase</fullName>
        <ecNumber evidence="1">2.7.2.8</ecNumber>
    </recommendedName>
    <alternativeName>
        <fullName evidence="1">N-acetyl-L-glutamate 5-phosphotransferase</fullName>
    </alternativeName>
    <alternativeName>
        <fullName evidence="1">NAG kinase</fullName>
        <shortName evidence="1">NAGK</shortName>
    </alternativeName>
</protein>
<accession>B5QXQ4</accession>
<sequence length="258" mass="27007">MMNPLIIKLGGVLLDSEEALERLFTALVNYRESHQRPLVIVHGGGCVVDELMKGLNLPVKKKDGLRVTPADQIGIITGALAGTANKTLLAWAKKHHIASVGLFLGDGDSVNVTQLDEALGHVGLAQPGSPKLINMLLENGFLPVVSSIGVTDDGQLMNVNADQAATALAATLGADLILLSDVSGILDGKGQRIAEMTASKAEQLIDQGIITDGMIVKVNAALDAARALGRPVDIASWRHAEQLPALFNGTPIGTRILA</sequence>
<organism>
    <name type="scientific">Salmonella enteritidis PT4 (strain P125109)</name>
    <dbReference type="NCBI Taxonomy" id="550537"/>
    <lineage>
        <taxon>Bacteria</taxon>
        <taxon>Pseudomonadati</taxon>
        <taxon>Pseudomonadota</taxon>
        <taxon>Gammaproteobacteria</taxon>
        <taxon>Enterobacterales</taxon>
        <taxon>Enterobacteriaceae</taxon>
        <taxon>Salmonella</taxon>
    </lineage>
</organism>
<name>ARGB_SALEP</name>
<evidence type="ECO:0000255" key="1">
    <source>
        <dbReference type="HAMAP-Rule" id="MF_00082"/>
    </source>
</evidence>
<reference key="1">
    <citation type="journal article" date="2008" name="Genome Res.">
        <title>Comparative genome analysis of Salmonella enteritidis PT4 and Salmonella gallinarum 287/91 provides insights into evolutionary and host adaptation pathways.</title>
        <authorList>
            <person name="Thomson N.R."/>
            <person name="Clayton D.J."/>
            <person name="Windhorst D."/>
            <person name="Vernikos G."/>
            <person name="Davidson S."/>
            <person name="Churcher C."/>
            <person name="Quail M.A."/>
            <person name="Stevens M."/>
            <person name="Jones M.A."/>
            <person name="Watson M."/>
            <person name="Barron A."/>
            <person name="Layton A."/>
            <person name="Pickard D."/>
            <person name="Kingsley R.A."/>
            <person name="Bignell A."/>
            <person name="Clark L."/>
            <person name="Harris B."/>
            <person name="Ormond D."/>
            <person name="Abdellah Z."/>
            <person name="Brooks K."/>
            <person name="Cherevach I."/>
            <person name="Chillingworth T."/>
            <person name="Woodward J."/>
            <person name="Norberczak H."/>
            <person name="Lord A."/>
            <person name="Arrowsmith C."/>
            <person name="Jagels K."/>
            <person name="Moule S."/>
            <person name="Mungall K."/>
            <person name="Saunders M."/>
            <person name="Whitehead S."/>
            <person name="Chabalgoity J.A."/>
            <person name="Maskell D."/>
            <person name="Humphreys T."/>
            <person name="Roberts M."/>
            <person name="Barrow P.A."/>
            <person name="Dougan G."/>
            <person name="Parkhill J."/>
        </authorList>
    </citation>
    <scope>NUCLEOTIDE SEQUENCE [LARGE SCALE GENOMIC DNA]</scope>
    <source>
        <strain>P125109</strain>
    </source>
</reference>
<dbReference type="EC" id="2.7.2.8" evidence="1"/>
<dbReference type="EMBL" id="AM933172">
    <property type="protein sequence ID" value="CAR35489.1"/>
    <property type="molecule type" value="Genomic_DNA"/>
</dbReference>
<dbReference type="RefSeq" id="WP_001575262.1">
    <property type="nucleotide sequence ID" value="NC_011294.1"/>
</dbReference>
<dbReference type="SMR" id="B5QXQ4"/>
<dbReference type="KEGG" id="set:SEN3917"/>
<dbReference type="HOGENOM" id="CLU_053680_1_1_6"/>
<dbReference type="UniPathway" id="UPA00068">
    <property type="reaction ID" value="UER00107"/>
</dbReference>
<dbReference type="Proteomes" id="UP000000613">
    <property type="component" value="Chromosome"/>
</dbReference>
<dbReference type="GO" id="GO:0005737">
    <property type="term" value="C:cytoplasm"/>
    <property type="evidence" value="ECO:0007669"/>
    <property type="project" value="UniProtKB-SubCell"/>
</dbReference>
<dbReference type="GO" id="GO:0003991">
    <property type="term" value="F:acetylglutamate kinase activity"/>
    <property type="evidence" value="ECO:0007669"/>
    <property type="project" value="UniProtKB-UniRule"/>
</dbReference>
<dbReference type="GO" id="GO:0005524">
    <property type="term" value="F:ATP binding"/>
    <property type="evidence" value="ECO:0007669"/>
    <property type="project" value="UniProtKB-UniRule"/>
</dbReference>
<dbReference type="GO" id="GO:0042450">
    <property type="term" value="P:arginine biosynthetic process via ornithine"/>
    <property type="evidence" value="ECO:0007669"/>
    <property type="project" value="UniProtKB-UniRule"/>
</dbReference>
<dbReference type="GO" id="GO:0006526">
    <property type="term" value="P:L-arginine biosynthetic process"/>
    <property type="evidence" value="ECO:0007669"/>
    <property type="project" value="UniProtKB-UniPathway"/>
</dbReference>
<dbReference type="CDD" id="cd04249">
    <property type="entry name" value="AAK_NAGK-NC"/>
    <property type="match status" value="1"/>
</dbReference>
<dbReference type="FunFam" id="3.40.1160.10:FF:000008">
    <property type="entry name" value="Acetylglutamate kinase"/>
    <property type="match status" value="1"/>
</dbReference>
<dbReference type="Gene3D" id="3.40.1160.10">
    <property type="entry name" value="Acetylglutamate kinase-like"/>
    <property type="match status" value="1"/>
</dbReference>
<dbReference type="HAMAP" id="MF_00082">
    <property type="entry name" value="ArgB"/>
    <property type="match status" value="1"/>
</dbReference>
<dbReference type="InterPro" id="IPR036393">
    <property type="entry name" value="AceGlu_kinase-like_sf"/>
</dbReference>
<dbReference type="InterPro" id="IPR004662">
    <property type="entry name" value="AcgluKinase_fam"/>
</dbReference>
<dbReference type="InterPro" id="IPR037528">
    <property type="entry name" value="ArgB"/>
</dbReference>
<dbReference type="InterPro" id="IPR001048">
    <property type="entry name" value="Asp/Glu/Uridylate_kinase"/>
</dbReference>
<dbReference type="InterPro" id="IPR041731">
    <property type="entry name" value="NAGK-NC"/>
</dbReference>
<dbReference type="NCBIfam" id="TIGR00761">
    <property type="entry name" value="argB"/>
    <property type="match status" value="1"/>
</dbReference>
<dbReference type="PANTHER" id="PTHR23342">
    <property type="entry name" value="N-ACETYLGLUTAMATE SYNTHASE"/>
    <property type="match status" value="1"/>
</dbReference>
<dbReference type="PANTHER" id="PTHR23342:SF0">
    <property type="entry name" value="N-ACETYLGLUTAMATE SYNTHASE, MITOCHONDRIAL"/>
    <property type="match status" value="1"/>
</dbReference>
<dbReference type="Pfam" id="PF00696">
    <property type="entry name" value="AA_kinase"/>
    <property type="match status" value="1"/>
</dbReference>
<dbReference type="PIRSF" id="PIRSF000728">
    <property type="entry name" value="NAGK"/>
    <property type="match status" value="1"/>
</dbReference>
<dbReference type="SUPFAM" id="SSF53633">
    <property type="entry name" value="Carbamate kinase-like"/>
    <property type="match status" value="1"/>
</dbReference>
<keyword id="KW-0028">Amino-acid biosynthesis</keyword>
<keyword id="KW-0055">Arginine biosynthesis</keyword>
<keyword id="KW-0067">ATP-binding</keyword>
<keyword id="KW-0963">Cytoplasm</keyword>
<keyword id="KW-0418">Kinase</keyword>
<keyword id="KW-0547">Nucleotide-binding</keyword>
<keyword id="KW-0808">Transferase</keyword>
<comment type="function">
    <text evidence="1">Catalyzes the ATP-dependent phosphorylation of N-acetyl-L-glutamate.</text>
</comment>
<comment type="catalytic activity">
    <reaction evidence="1">
        <text>N-acetyl-L-glutamate + ATP = N-acetyl-L-glutamyl 5-phosphate + ADP</text>
        <dbReference type="Rhea" id="RHEA:14629"/>
        <dbReference type="ChEBI" id="CHEBI:30616"/>
        <dbReference type="ChEBI" id="CHEBI:44337"/>
        <dbReference type="ChEBI" id="CHEBI:57936"/>
        <dbReference type="ChEBI" id="CHEBI:456216"/>
        <dbReference type="EC" id="2.7.2.8"/>
    </reaction>
</comment>
<comment type="pathway">
    <text evidence="1">Amino-acid biosynthesis; L-arginine biosynthesis; N(2)-acetyl-L-ornithine from L-glutamate: step 2/4.</text>
</comment>
<comment type="subunit">
    <text evidence="1">Homodimer.</text>
</comment>
<comment type="subcellular location">
    <subcellularLocation>
        <location evidence="1">Cytoplasm</location>
    </subcellularLocation>
</comment>
<comment type="similarity">
    <text evidence="1">Belongs to the acetylglutamate kinase family. ArgB subfamily.</text>
</comment>
<proteinExistence type="inferred from homology"/>
<feature type="chain" id="PRO_1000092880" description="Acetylglutamate kinase">
    <location>
        <begin position="1"/>
        <end position="258"/>
    </location>
</feature>
<feature type="binding site" evidence="1">
    <location>
        <begin position="44"/>
        <end position="45"/>
    </location>
    <ligand>
        <name>substrate</name>
    </ligand>
</feature>
<feature type="binding site" evidence="1">
    <location>
        <position position="66"/>
    </location>
    <ligand>
        <name>substrate</name>
    </ligand>
</feature>
<feature type="binding site" evidence="1">
    <location>
        <position position="158"/>
    </location>
    <ligand>
        <name>substrate</name>
    </ligand>
</feature>
<feature type="binding site" evidence="1">
    <location>
        <begin position="181"/>
        <end position="186"/>
    </location>
    <ligand>
        <name>ATP</name>
        <dbReference type="ChEBI" id="CHEBI:30616"/>
    </ligand>
</feature>
<feature type="binding site" evidence="1">
    <location>
        <begin position="209"/>
        <end position="211"/>
    </location>
    <ligand>
        <name>ATP</name>
        <dbReference type="ChEBI" id="CHEBI:30616"/>
    </ligand>
</feature>
<feature type="site" description="Transition state stabilizer" evidence="1">
    <location>
        <position position="8"/>
    </location>
</feature>
<feature type="site" description="Transition state stabilizer" evidence="1">
    <location>
        <position position="217"/>
    </location>
</feature>